<accession>P11432</accession>
<reference key="1">
    <citation type="journal article" date="1987" name="Mol. Gen. Genet.">
        <title>The structure and light-dependent transient expression of a nuclear-encoded chloroplast protein gene from pea (Pisum sativum L.).</title>
        <authorList>
            <person name="Kolanus W."/>
            <person name="Scharnhorst C."/>
            <person name="Kuehne U."/>
            <person name="Herzfeld F."/>
        </authorList>
    </citation>
    <scope>NUCLEOTIDE SEQUENCE [GENOMIC DNA]</scope>
</reference>
<protein>
    <recommendedName>
        <fullName>Early light-induced protein, chloroplastic</fullName>
        <shortName>ELIP</shortName>
    </recommendedName>
</protein>
<feature type="transit peptide" description="Chloroplast" evidence="1">
    <location>
        <begin position="1"/>
        <end position="48"/>
    </location>
</feature>
<feature type="chain" id="PRO_0000007800" description="Early light-induced protein, chloroplastic">
    <location>
        <begin position="49"/>
        <end position="196"/>
    </location>
</feature>
<feature type="transmembrane region" description="Helical" evidence="1">
    <location>
        <begin position="105"/>
        <end position="125"/>
    </location>
</feature>
<feature type="transmembrane region" description="Helical" evidence="1">
    <location>
        <begin position="132"/>
        <end position="152"/>
    </location>
</feature>
<feature type="transmembrane region" description="Helical" evidence="1">
    <location>
        <begin position="176"/>
        <end position="196"/>
    </location>
</feature>
<feature type="region of interest" description="Disordered" evidence="2">
    <location>
        <begin position="47"/>
        <end position="81"/>
    </location>
</feature>
<feature type="compositionally biased region" description="Basic and acidic residues" evidence="2">
    <location>
        <begin position="47"/>
        <end position="57"/>
    </location>
</feature>
<organism>
    <name type="scientific">Pisum sativum</name>
    <name type="common">Garden pea</name>
    <name type="synonym">Lathyrus oleraceus</name>
    <dbReference type="NCBI Taxonomy" id="3888"/>
    <lineage>
        <taxon>Eukaryota</taxon>
        <taxon>Viridiplantae</taxon>
        <taxon>Streptophyta</taxon>
        <taxon>Embryophyta</taxon>
        <taxon>Tracheophyta</taxon>
        <taxon>Spermatophyta</taxon>
        <taxon>Magnoliopsida</taxon>
        <taxon>eudicotyledons</taxon>
        <taxon>Gunneridae</taxon>
        <taxon>Pentapetalae</taxon>
        <taxon>rosids</taxon>
        <taxon>fabids</taxon>
        <taxon>Fabales</taxon>
        <taxon>Fabaceae</taxon>
        <taxon>Papilionoideae</taxon>
        <taxon>50 kb inversion clade</taxon>
        <taxon>NPAAA clade</taxon>
        <taxon>Hologalegina</taxon>
        <taxon>IRL clade</taxon>
        <taxon>Fabeae</taxon>
        <taxon>Pisum</taxon>
    </lineage>
</organism>
<evidence type="ECO:0000255" key="1"/>
<evidence type="ECO:0000256" key="2">
    <source>
        <dbReference type="SAM" id="MobiDB-lite"/>
    </source>
</evidence>
<evidence type="ECO:0000305" key="3"/>
<dbReference type="EMBL" id="X05979">
    <property type="protein sequence ID" value="CAA29399.1"/>
    <property type="molecule type" value="Genomic_DNA"/>
</dbReference>
<dbReference type="PIR" id="S01056">
    <property type="entry name" value="S01056"/>
</dbReference>
<dbReference type="SMR" id="P11432"/>
<dbReference type="GO" id="GO:0031969">
    <property type="term" value="C:chloroplast membrane"/>
    <property type="evidence" value="ECO:0007669"/>
    <property type="project" value="UniProtKB-SubCell"/>
</dbReference>
<dbReference type="InterPro" id="IPR022796">
    <property type="entry name" value="Chloroa_b-bind"/>
</dbReference>
<dbReference type="PANTHER" id="PTHR14154">
    <property type="entry name" value="UPF0041 BRAIN PROTEIN 44-RELATED"/>
    <property type="match status" value="1"/>
</dbReference>
<dbReference type="Pfam" id="PF00504">
    <property type="entry name" value="Chloroa_b-bind"/>
    <property type="match status" value="1"/>
</dbReference>
<dbReference type="SUPFAM" id="SSF103511">
    <property type="entry name" value="Chlorophyll a-b binding protein"/>
    <property type="match status" value="1"/>
</dbReference>
<proteinExistence type="evidence at transcript level"/>
<keyword id="KW-0150">Chloroplast</keyword>
<keyword id="KW-0472">Membrane</keyword>
<keyword id="KW-0934">Plastid</keyword>
<keyword id="KW-0809">Transit peptide</keyword>
<keyword id="KW-0812">Transmembrane</keyword>
<keyword id="KW-1133">Transmembrane helix</keyword>
<name>ELI_PEA</name>
<sequence length="196" mass="20860">MAVSSCQSIMSNSMTNISSRSRVNQFTNIPSVYIPTLRRNVSLKVRSMAEGEPKEQSKVAVDPTTPTASTPTPQPAYTRPPKMSTKFSDLMAFSGPAPERINGRLAMIGFVAAMGVEIAKGQGLSEQLSGGGVAWFLGTSVLLSLASLIPFFQGVSVESKSKSIMSSDAEFWNGRIAMLGLVALAFTEFVKGTSLV</sequence>
<comment type="function">
    <text>Probably involved in the integration of pigments into the mature pigment-protein complexes.</text>
</comment>
<comment type="subcellular location">
    <subcellularLocation>
        <location evidence="3">Plastid</location>
        <location evidence="3">Chloroplast membrane</location>
        <topology evidence="3">Multi-pass membrane protein</topology>
    </subcellularLocation>
    <text>Associated with both photosystems I and II.</text>
</comment>
<comment type="developmental stage">
    <text>Appears transiently during greening of etiolated seedlings and disappears before chloroplast development is completed.</text>
</comment>
<comment type="induction">
    <text>By light.</text>
</comment>
<comment type="similarity">
    <text evidence="3">Belongs to the ELIP/psbS family.</text>
</comment>